<evidence type="ECO:0000269" key="1">
    <source>
    </source>
</evidence>
<evidence type="ECO:0000269" key="2">
    <source>
    </source>
</evidence>
<evidence type="ECO:0000269" key="3">
    <source>
    </source>
</evidence>
<evidence type="ECO:0000269" key="4">
    <source>
    </source>
</evidence>
<evidence type="ECO:0000269" key="5">
    <source>
    </source>
</evidence>
<evidence type="ECO:0000269" key="6">
    <source>
    </source>
</evidence>
<evidence type="ECO:0000269" key="7">
    <source>
    </source>
</evidence>
<evidence type="ECO:0000303" key="8">
    <source>
    </source>
</evidence>
<evidence type="ECO:0000303" key="9">
    <source>
    </source>
</evidence>
<evidence type="ECO:0000303" key="10">
    <source>
    </source>
</evidence>
<evidence type="ECO:0000305" key="11"/>
<evidence type="ECO:0000305" key="12">
    <source>
    </source>
</evidence>
<evidence type="ECO:0007744" key="13">
    <source>
        <dbReference type="PDB" id="7APK"/>
    </source>
</evidence>
<evidence type="ECO:0007744" key="14">
    <source>
        <dbReference type="PDB" id="7ZNK"/>
    </source>
</evidence>
<evidence type="ECO:0007744" key="15">
    <source>
        <dbReference type="PDB" id="7ZNL"/>
    </source>
</evidence>
<evidence type="ECO:0007744" key="16">
    <source>
    </source>
</evidence>
<evidence type="ECO:0007829" key="17">
    <source>
        <dbReference type="PDB" id="7APK"/>
    </source>
</evidence>
<proteinExistence type="evidence at protein level"/>
<organism>
    <name type="scientific">Homo sapiens</name>
    <name type="common">Human</name>
    <dbReference type="NCBI Taxonomy" id="9606"/>
    <lineage>
        <taxon>Eukaryota</taxon>
        <taxon>Metazoa</taxon>
        <taxon>Chordata</taxon>
        <taxon>Craniata</taxon>
        <taxon>Vertebrata</taxon>
        <taxon>Euteleostomi</taxon>
        <taxon>Mammalia</taxon>
        <taxon>Eutheria</taxon>
        <taxon>Euarchontoglires</taxon>
        <taxon>Primates</taxon>
        <taxon>Haplorrhini</taxon>
        <taxon>Catarrhini</taxon>
        <taxon>Hominidae</taxon>
        <taxon>Homo</taxon>
    </lineage>
</organism>
<accession>Q86W42</accession>
<accession>B2RA85</accession>
<accession>Q8NBR1</accession>
<accession>Q9BTV9</accession>
<dbReference type="EMBL" id="AK075330">
    <property type="protein sequence ID" value="BAC11552.1"/>
    <property type="molecule type" value="mRNA"/>
</dbReference>
<dbReference type="EMBL" id="AK314086">
    <property type="protein sequence ID" value="BAG36782.1"/>
    <property type="status" value="ALT_INIT"/>
    <property type="molecule type" value="mRNA"/>
</dbReference>
<dbReference type="EMBL" id="BC003118">
    <property type="protein sequence ID" value="AAH03118.1"/>
    <property type="molecule type" value="mRNA"/>
</dbReference>
<dbReference type="EMBL" id="BC050674">
    <property type="protein sequence ID" value="AAH50674.1"/>
    <property type="molecule type" value="mRNA"/>
</dbReference>
<dbReference type="CCDS" id="CCDS10491.1">
    <molecule id="Q86W42-1"/>
</dbReference>
<dbReference type="CCDS" id="CCDS45392.1">
    <molecule id="Q86W42-3"/>
</dbReference>
<dbReference type="CCDS" id="CCDS86500.1">
    <molecule id="Q86W42-2"/>
</dbReference>
<dbReference type="RefSeq" id="NP_001135822.1">
    <molecule id="Q86W42-3"/>
    <property type="nucleotide sequence ID" value="NM_001142350.3"/>
</dbReference>
<dbReference type="RefSeq" id="NP_001334632.1">
    <molecule id="Q86W42-2"/>
    <property type="nucleotide sequence ID" value="NM_001347703.2"/>
</dbReference>
<dbReference type="RefSeq" id="NP_001334633.1">
    <molecule id="Q86W42-1"/>
    <property type="nucleotide sequence ID" value="NM_001347704.2"/>
</dbReference>
<dbReference type="RefSeq" id="NP_077315.2">
    <molecule id="Q86W42-1"/>
    <property type="nucleotide sequence ID" value="NM_024339.4"/>
</dbReference>
<dbReference type="PDB" id="7APK">
    <property type="method" value="EM"/>
    <property type="resolution" value="3.30 A"/>
    <property type="chains" value="F/N/f/n=1-341"/>
</dbReference>
<dbReference type="PDB" id="7ZNK">
    <property type="method" value="EM"/>
    <property type="resolution" value="3.90 A"/>
    <property type="chains" value="F/N/f/n=1-341"/>
</dbReference>
<dbReference type="PDB" id="7ZNL">
    <property type="method" value="EM"/>
    <property type="resolution" value="3.45 A"/>
    <property type="chains" value="F/N/f/n=1-341"/>
</dbReference>
<dbReference type="PDBsum" id="7APK"/>
<dbReference type="PDBsum" id="7ZNK"/>
<dbReference type="PDBsum" id="7ZNL"/>
<dbReference type="EMDB" id="EMD-11857"/>
<dbReference type="EMDB" id="EMD-14804"/>
<dbReference type="EMDB" id="EMD-14808"/>
<dbReference type="SMR" id="Q86W42"/>
<dbReference type="BioGRID" id="122605">
    <property type="interactions" value="95"/>
</dbReference>
<dbReference type="ComplexPortal" id="CPX-2488">
    <property type="entry name" value="TREX transcription-export complex, DX39B variant"/>
</dbReference>
<dbReference type="ComplexPortal" id="CPX-7261">
    <property type="entry name" value="TREX transcription-export complex, DX39A variant"/>
</dbReference>
<dbReference type="CORUM" id="Q86W42"/>
<dbReference type="FunCoup" id="Q86W42">
    <property type="interactions" value="3069"/>
</dbReference>
<dbReference type="IntAct" id="Q86W42">
    <property type="interactions" value="40"/>
</dbReference>
<dbReference type="MINT" id="Q86W42"/>
<dbReference type="STRING" id="9606.ENSP00000326531"/>
<dbReference type="TCDB" id="3.A.22.1.2">
    <property type="family name" value="the transcription-coupled trex/tap nuclear mrna export complex (trex) family"/>
</dbReference>
<dbReference type="GlyGen" id="Q86W42">
    <property type="glycosylation" value="2 sites, 1 O-linked glycan (2 sites)"/>
</dbReference>
<dbReference type="iPTMnet" id="Q86W42"/>
<dbReference type="PhosphoSitePlus" id="Q86W42"/>
<dbReference type="SwissPalm" id="Q86W42"/>
<dbReference type="BioMuta" id="THOC6"/>
<dbReference type="DMDM" id="74759455"/>
<dbReference type="jPOST" id="Q86W42"/>
<dbReference type="MassIVE" id="Q86W42"/>
<dbReference type="PaxDb" id="9606-ENSP00000326531"/>
<dbReference type="PeptideAtlas" id="Q86W42"/>
<dbReference type="ProteomicsDB" id="70112">
    <molecule id="Q86W42-1"/>
</dbReference>
<dbReference type="ProteomicsDB" id="70113">
    <molecule id="Q86W42-2"/>
</dbReference>
<dbReference type="ProteomicsDB" id="70114">
    <molecule id="Q86W42-3"/>
</dbReference>
<dbReference type="Pumba" id="Q86W42"/>
<dbReference type="Antibodypedia" id="23992">
    <property type="antibodies" value="162 antibodies from 26 providers"/>
</dbReference>
<dbReference type="DNASU" id="79228"/>
<dbReference type="Ensembl" id="ENST00000253952.9">
    <molecule id="Q86W42-3"/>
    <property type="protein sequence ID" value="ENSP00000253952.9"/>
    <property type="gene ID" value="ENSG00000131652.14"/>
</dbReference>
<dbReference type="Ensembl" id="ENST00000326266.13">
    <molecule id="Q86W42-1"/>
    <property type="protein sequence ID" value="ENSP00000326531.8"/>
    <property type="gene ID" value="ENSG00000131652.14"/>
</dbReference>
<dbReference type="Ensembl" id="ENST00000574549.5">
    <molecule id="Q86W42-2"/>
    <property type="protein sequence ID" value="ENSP00000458295.1"/>
    <property type="gene ID" value="ENSG00000131652.14"/>
</dbReference>
<dbReference type="Ensembl" id="ENST00000575576.5">
    <molecule id="Q86W42-2"/>
    <property type="protein sequence ID" value="ENSP00000460015.1"/>
    <property type="gene ID" value="ENSG00000131652.14"/>
</dbReference>
<dbReference type="GeneID" id="79228"/>
<dbReference type="KEGG" id="hsa:79228"/>
<dbReference type="MANE-Select" id="ENST00000326266.13">
    <property type="protein sequence ID" value="ENSP00000326531.8"/>
    <property type="RefSeq nucleotide sequence ID" value="NM_024339.5"/>
    <property type="RefSeq protein sequence ID" value="NP_077315.2"/>
</dbReference>
<dbReference type="UCSC" id="uc002cta.2">
    <molecule id="Q86W42-1"/>
    <property type="organism name" value="human"/>
</dbReference>
<dbReference type="AGR" id="HGNC:28369"/>
<dbReference type="CTD" id="79228"/>
<dbReference type="DisGeNET" id="79228"/>
<dbReference type="GeneCards" id="THOC6"/>
<dbReference type="GeneReviews" id="THOC6"/>
<dbReference type="HGNC" id="HGNC:28369">
    <property type="gene designation" value="THOC6"/>
</dbReference>
<dbReference type="HPA" id="ENSG00000131652">
    <property type="expression patterns" value="Low tissue specificity"/>
</dbReference>
<dbReference type="MalaCards" id="THOC6"/>
<dbReference type="MIM" id="613680">
    <property type="type" value="phenotype"/>
</dbReference>
<dbReference type="MIM" id="615403">
    <property type="type" value="gene"/>
</dbReference>
<dbReference type="neXtProt" id="NX_Q86W42"/>
<dbReference type="OpenTargets" id="ENSG00000131652"/>
<dbReference type="Orphanet" id="363444">
    <property type="disease" value="THOC6-related developmental delay-microcephaly-facial dysmorphism syndrome"/>
</dbReference>
<dbReference type="PharmGKB" id="PA142670592"/>
<dbReference type="VEuPathDB" id="HostDB:ENSG00000131652"/>
<dbReference type="eggNOG" id="KOG0649">
    <property type="taxonomic scope" value="Eukaryota"/>
</dbReference>
<dbReference type="GeneTree" id="ENSGT00390000015278"/>
<dbReference type="HOGENOM" id="CLU_060667_0_0_1"/>
<dbReference type="InParanoid" id="Q86W42"/>
<dbReference type="OMA" id="FTEDWLL"/>
<dbReference type="OrthoDB" id="273067at2759"/>
<dbReference type="PAN-GO" id="Q86W42">
    <property type="GO annotations" value="3 GO annotations based on evolutionary models"/>
</dbReference>
<dbReference type="PhylomeDB" id="Q86W42"/>
<dbReference type="TreeFam" id="TF324760"/>
<dbReference type="PathwayCommons" id="Q86W42"/>
<dbReference type="Reactome" id="R-HSA-159236">
    <property type="pathway name" value="Transport of Mature mRNA derived from an Intron-Containing Transcript"/>
</dbReference>
<dbReference type="Reactome" id="R-HSA-72187">
    <property type="pathway name" value="mRNA 3'-end processing"/>
</dbReference>
<dbReference type="Reactome" id="R-HSA-73856">
    <property type="pathway name" value="RNA Polymerase II Transcription Termination"/>
</dbReference>
<dbReference type="SignaLink" id="Q86W42"/>
<dbReference type="SIGNOR" id="Q86W42"/>
<dbReference type="BioGRID-ORCS" id="79228">
    <property type="hits" value="238 hits in 1166 CRISPR screens"/>
</dbReference>
<dbReference type="ChiTaRS" id="THOC6">
    <property type="organism name" value="human"/>
</dbReference>
<dbReference type="GenomeRNAi" id="79228"/>
<dbReference type="Pharos" id="Q86W42">
    <property type="development level" value="Tbio"/>
</dbReference>
<dbReference type="PRO" id="PR:Q86W42"/>
<dbReference type="Proteomes" id="UP000005640">
    <property type="component" value="Chromosome 16"/>
</dbReference>
<dbReference type="RNAct" id="Q86W42">
    <property type="molecule type" value="protein"/>
</dbReference>
<dbReference type="Bgee" id="ENSG00000131652">
    <property type="expression patterns" value="Expressed in granulocyte and 110 other cell types or tissues"/>
</dbReference>
<dbReference type="GO" id="GO:0016604">
    <property type="term" value="C:nuclear body"/>
    <property type="evidence" value="ECO:0000314"/>
    <property type="project" value="HPA"/>
</dbReference>
<dbReference type="GO" id="GO:0016607">
    <property type="term" value="C:nuclear speck"/>
    <property type="evidence" value="ECO:0000314"/>
    <property type="project" value="HPA"/>
</dbReference>
<dbReference type="GO" id="GO:0005654">
    <property type="term" value="C:nucleoplasm"/>
    <property type="evidence" value="ECO:0000314"/>
    <property type="project" value="HPA"/>
</dbReference>
<dbReference type="GO" id="GO:0005634">
    <property type="term" value="C:nucleus"/>
    <property type="evidence" value="ECO:0000314"/>
    <property type="project" value="UniProtKB"/>
</dbReference>
<dbReference type="GO" id="GO:0000347">
    <property type="term" value="C:THO complex"/>
    <property type="evidence" value="ECO:0000314"/>
    <property type="project" value="UniProtKB"/>
</dbReference>
<dbReference type="GO" id="GO:0000445">
    <property type="term" value="C:THO complex part of transcription export complex"/>
    <property type="evidence" value="ECO:0000314"/>
    <property type="project" value="UniProtKB"/>
</dbReference>
<dbReference type="GO" id="GO:0000346">
    <property type="term" value="C:transcription export complex"/>
    <property type="evidence" value="ECO:0000314"/>
    <property type="project" value="UniProtKB"/>
</dbReference>
<dbReference type="GO" id="GO:0003723">
    <property type="term" value="F:RNA binding"/>
    <property type="evidence" value="ECO:0007669"/>
    <property type="project" value="UniProtKB-KW"/>
</dbReference>
<dbReference type="GO" id="GO:0006915">
    <property type="term" value="P:apoptotic process"/>
    <property type="evidence" value="ECO:0007669"/>
    <property type="project" value="UniProtKB-KW"/>
</dbReference>
<dbReference type="GO" id="GO:0007417">
    <property type="term" value="P:central nervous system development"/>
    <property type="evidence" value="ECO:0000315"/>
    <property type="project" value="UniProtKB"/>
</dbReference>
<dbReference type="GO" id="GO:0006406">
    <property type="term" value="P:mRNA export from nucleus"/>
    <property type="evidence" value="ECO:0000314"/>
    <property type="project" value="UniProtKB"/>
</dbReference>
<dbReference type="GO" id="GO:0006397">
    <property type="term" value="P:mRNA processing"/>
    <property type="evidence" value="ECO:0007669"/>
    <property type="project" value="UniProtKB-KW"/>
</dbReference>
<dbReference type="GO" id="GO:0008380">
    <property type="term" value="P:RNA splicing"/>
    <property type="evidence" value="ECO:0007669"/>
    <property type="project" value="UniProtKB-KW"/>
</dbReference>
<dbReference type="FunFam" id="2.130.10.10:FF:000240">
    <property type="entry name" value="THO complex subunit 6 homolog isoform X1"/>
    <property type="match status" value="1"/>
</dbReference>
<dbReference type="Gene3D" id="2.130.10.10">
    <property type="entry name" value="YVTN repeat-like/Quinoprotein amine dehydrogenase"/>
    <property type="match status" value="1"/>
</dbReference>
<dbReference type="InterPro" id="IPR042626">
    <property type="entry name" value="THOC6"/>
</dbReference>
<dbReference type="InterPro" id="IPR015943">
    <property type="entry name" value="WD40/YVTN_repeat-like_dom_sf"/>
</dbReference>
<dbReference type="InterPro" id="IPR019775">
    <property type="entry name" value="WD40_repeat_CS"/>
</dbReference>
<dbReference type="InterPro" id="IPR036322">
    <property type="entry name" value="WD40_repeat_dom_sf"/>
</dbReference>
<dbReference type="InterPro" id="IPR001680">
    <property type="entry name" value="WD40_rpt"/>
</dbReference>
<dbReference type="PANTHER" id="PTHR44411">
    <property type="entry name" value="THO COMPLEX SUBUNIT 6 HOMOLOG"/>
    <property type="match status" value="1"/>
</dbReference>
<dbReference type="PANTHER" id="PTHR44411:SF1">
    <property type="entry name" value="THO COMPLEX SUBUNIT 6 HOMOLOG"/>
    <property type="match status" value="1"/>
</dbReference>
<dbReference type="Pfam" id="PF00400">
    <property type="entry name" value="WD40"/>
    <property type="match status" value="2"/>
</dbReference>
<dbReference type="SMART" id="SM00320">
    <property type="entry name" value="WD40"/>
    <property type="match status" value="3"/>
</dbReference>
<dbReference type="SUPFAM" id="SSF50978">
    <property type="entry name" value="WD40 repeat-like"/>
    <property type="match status" value="1"/>
</dbReference>
<dbReference type="PROSITE" id="PS00678">
    <property type="entry name" value="WD_REPEATS_1"/>
    <property type="match status" value="1"/>
</dbReference>
<dbReference type="PROSITE" id="PS50082">
    <property type="entry name" value="WD_REPEATS_2"/>
    <property type="match status" value="1"/>
</dbReference>
<dbReference type="PROSITE" id="PS50294">
    <property type="entry name" value="WD_REPEATS_REGION"/>
    <property type="match status" value="1"/>
</dbReference>
<gene>
    <name type="primary">THOC6</name>
    <name type="synonym">WDR58</name>
    <name type="ORF">PSEC0006</name>
</gene>
<sequence>MERAVPLAVPLGQTEVFQALQRLHMTIFSQSVSPCGKFLAAGNNYGQIAIFSLSSALSSEAKEESKKPVVTFQAHDGPVYSMVSTDRHLLSAGDGEVKAWLWAEMLKKGCKELWRRQPPYRTSLEVPEINALLLVPKENSLILAGGDCQLHTMDLETGTFTRVLRGHTDYIHCLALRERSPEVLSGGEDGAVRLWDLRTAKEVQTIEVYKHEECSRPHNGRWIGCLATDSDWMVCGGGPALTLWHLRSSTPTTIFPIRAPQKHVTFYQDLILSAGQGRCVNQWQLSGELKAQVPGSSPGLLSLSLNQQPAAPECKVLTAAGNSCRVDVFTNLGYRAFSLSF</sequence>
<protein>
    <recommendedName>
        <fullName evidence="10">THO complex subunit 6</fullName>
    </recommendedName>
    <alternativeName>
        <fullName>Functional spliceosome-associated protein 35</fullName>
        <shortName>fSAP35</shortName>
    </alternativeName>
    <alternativeName>
        <fullName>WD repeat-containing protein 58</fullName>
    </alternativeName>
</protein>
<comment type="function">
    <text evidence="1 2 3 5 6">Component of the THO subcomplex of the TREX complex which is thought to couple mRNA transcription, processing and nuclear export, and which specifically associates with spliced mRNA and not with unspliced pre-mRNA (PubMed:15833825, PubMed:15998806, PubMed:17190602). Plays a key structural role in the oligomerization of the THO-DDX39B complex (PubMed:33191911). TREX is recruited to spliced mRNAs by a transcription-independent mechanism, binds to mRNA upstream of the exon-junction complex (EJC) and is recruited in a splicing- and cap-dependent manner to a region near the 5' end of the mRNA where it functions in mRNA export to the cytoplasm via the TAP/NXF1 pathway (PubMed:15998806, PubMed:17190602). Plays a role in apoptosis negative control involved in brain development (PubMed:15833825, PubMed:23621916).</text>
</comment>
<comment type="function">
    <text evidence="4">(Microbial infection) The TREX complex is essential for the export of Kaposi's sarcoma-associated herpesvirus (KSHV) intronless mRNAs and infectious virus production.</text>
</comment>
<comment type="subunit">
    <text evidence="1 2 6 7">Component of the THO subcomplex, which is composed of THOC1, THOC2, THOC3, THOC5, THOC6 and THOC7 (PubMed:15833825, PubMed:15998806, PubMed:33191911, PubMed:37020021). The THO subcomplex interacts with DDX39B to form the THO-DDX39B complex which multimerizes into a 28-subunit tetrameric assembly (PubMed:33191911, PubMed:37020021). Component of the transcription/export (TREX) complex at least composed of ALYREF/THOC4, DDX39B, SARNP/CIP29, CHTOP and the THO subcomplex; in the complex interacts with THOC5; together with THOC5 and THOC7, plays a key structural role in the oligomerization of the THO-DDX39B complex (PubMed:33191911, PubMed:37020021). TREX seems to have a dynamic structure involving ATP-dependent remodeling (PubMed:37020021).</text>
</comment>
<comment type="subcellular location">
    <subcellularLocation>
        <location evidence="5">Nucleus</location>
    </subcellularLocation>
    <subcellularLocation>
        <location evidence="12">Nucleus speckle</location>
    </subcellularLocation>
</comment>
<comment type="alternative products">
    <event type="alternative splicing"/>
    <isoform>
        <id>Q86W42-1</id>
        <name>1</name>
        <sequence type="displayed"/>
    </isoform>
    <isoform>
        <id>Q86W42-2</id>
        <name>2</name>
        <name>hTREX40</name>
        <sequence type="described" ref="VSP_018079"/>
    </isoform>
    <isoform>
        <id>Q86W42-3</id>
        <name>3</name>
        <sequence type="described" ref="VSP_018078"/>
    </isoform>
</comment>
<comment type="disease" evidence="5">
    <disease id="DI-03901">
        <name>Beaulieu-Boycott-Innes syndrome</name>
        <acronym>BBIS</acronym>
        <description>An autosomal recessive neurodevelopmental disorder characterized by delayed development, moderate intellectual disability, and dysmorphic facial features. Other developmental anomalies, such as cardiac and renal defects, may also occur.</description>
        <dbReference type="MIM" id="613680"/>
    </disease>
    <text>The disease is caused by variants affecting the gene represented in this entry.</text>
</comment>
<comment type="similarity">
    <text evidence="11">Belongs to the WD repeat THOC6 family.</text>
</comment>
<comment type="sequence caution" evidence="11">
    <conflict type="erroneous initiation">
        <sequence resource="EMBL-CDS" id="BAG36782"/>
    </conflict>
    <text>Extended N-terminus.</text>
</comment>
<feature type="chain" id="PRO_0000233158" description="THO complex subunit 6">
    <location>
        <begin position="1"/>
        <end position="341"/>
    </location>
</feature>
<feature type="repeat" description="WD 1" evidence="13">
    <location>
        <begin position="22"/>
        <end position="61"/>
    </location>
</feature>
<feature type="repeat" description="WD 2" evidence="13">
    <location>
        <begin position="74"/>
        <end position="112"/>
    </location>
</feature>
<feature type="repeat" description="WD 3" evidence="13">
    <location>
        <begin position="124"/>
        <end position="165"/>
    </location>
</feature>
<feature type="repeat" description="WD 4" evidence="13">
    <location>
        <begin position="166"/>
        <end position="205"/>
    </location>
</feature>
<feature type="repeat" description="WD 5" evidence="13">
    <location>
        <begin position="215"/>
        <end position="254"/>
    </location>
</feature>
<feature type="repeat" description="WD 6" evidence="13">
    <location>
        <begin position="256"/>
        <end position="293"/>
    </location>
</feature>
<feature type="repeat" description="WD 7" evidence="13">
    <location>
        <begin position="295"/>
        <end position="339"/>
    </location>
</feature>
<feature type="modified residue" description="Phosphoserine" evidence="16">
    <location>
        <position position="180"/>
    </location>
</feature>
<feature type="splice variant" id="VSP_018079" description="In isoform 2." evidence="9">
    <location>
        <begin position="1"/>
        <end position="24"/>
    </location>
</feature>
<feature type="splice variant" id="VSP_018078" description="In isoform 3." evidence="8">
    <location>
        <begin position="271"/>
        <end position="315"/>
    </location>
</feature>
<feature type="sequence variant" id="VAR_069779" description="In BBIS; localizes to the cytoplasm and not to the nucleus; dbSNP:rs587777030." evidence="5">
    <original>G</original>
    <variation>R</variation>
    <location>
        <position position="46"/>
    </location>
</feature>
<feature type="sequence conflict" description="In Ref. 1; BAC11552." evidence="11" ref="1">
    <original>V</original>
    <variation>E</variation>
    <location>
        <position position="97"/>
    </location>
</feature>
<feature type="sequence conflict" description="In Ref. 1; BAG36782." evidence="11" ref="1">
    <original>R</original>
    <variation>S</variation>
    <location>
        <position position="121"/>
    </location>
</feature>
<feature type="helix" evidence="17">
    <location>
        <begin position="13"/>
        <end position="23"/>
    </location>
</feature>
<feature type="strand" evidence="17">
    <location>
        <begin position="30"/>
        <end position="32"/>
    </location>
</feature>
<feature type="strand" evidence="17">
    <location>
        <begin position="34"/>
        <end position="42"/>
    </location>
</feature>
<feature type="strand" evidence="17">
    <location>
        <begin position="46"/>
        <end position="52"/>
    </location>
</feature>
<feature type="helix" evidence="17">
    <location>
        <begin position="53"/>
        <end position="56"/>
    </location>
</feature>
<feature type="strand" evidence="17">
    <location>
        <begin position="57"/>
        <end position="60"/>
    </location>
</feature>
<feature type="helix" evidence="17">
    <location>
        <begin position="63"/>
        <end position="65"/>
    </location>
</feature>
<feature type="strand" evidence="17">
    <location>
        <begin position="69"/>
        <end position="73"/>
    </location>
</feature>
<feature type="strand" evidence="17">
    <location>
        <begin position="81"/>
        <end position="84"/>
    </location>
</feature>
<feature type="strand" evidence="17">
    <location>
        <begin position="86"/>
        <end position="92"/>
    </location>
</feature>
<feature type="strand" evidence="17">
    <location>
        <begin position="94"/>
        <end position="101"/>
    </location>
</feature>
<feature type="helix" evidence="17">
    <location>
        <begin position="102"/>
        <end position="105"/>
    </location>
</feature>
<feature type="strand" evidence="17">
    <location>
        <begin position="106"/>
        <end position="108"/>
    </location>
</feature>
<feature type="strand" evidence="17">
    <location>
        <begin position="129"/>
        <end position="135"/>
    </location>
</feature>
<feature type="turn" evidence="17">
    <location>
        <begin position="136"/>
        <end position="139"/>
    </location>
</feature>
<feature type="strand" evidence="17">
    <location>
        <begin position="140"/>
        <end position="145"/>
    </location>
</feature>
<feature type="strand" evidence="17">
    <location>
        <begin position="148"/>
        <end position="157"/>
    </location>
</feature>
<feature type="strand" evidence="17">
    <location>
        <begin position="160"/>
        <end position="164"/>
    </location>
</feature>
<feature type="strand" evidence="17">
    <location>
        <begin position="171"/>
        <end position="174"/>
    </location>
</feature>
<feature type="strand" evidence="17">
    <location>
        <begin position="178"/>
        <end position="181"/>
    </location>
</feature>
<feature type="strand" evidence="17">
    <location>
        <begin position="184"/>
        <end position="187"/>
    </location>
</feature>
<feature type="strand" evidence="17">
    <location>
        <begin position="190"/>
        <end position="196"/>
    </location>
</feature>
<feature type="turn" evidence="17">
    <location>
        <begin position="197"/>
        <end position="200"/>
    </location>
</feature>
<feature type="strand" evidence="17">
    <location>
        <begin position="201"/>
        <end position="207"/>
    </location>
</feature>
<feature type="turn" evidence="17">
    <location>
        <begin position="208"/>
        <end position="210"/>
    </location>
</feature>
<feature type="turn" evidence="17">
    <location>
        <begin position="212"/>
        <end position="214"/>
    </location>
</feature>
<feature type="turn" evidence="17">
    <location>
        <begin position="217"/>
        <end position="219"/>
    </location>
</feature>
<feature type="strand" evidence="17">
    <location>
        <begin position="223"/>
        <end position="225"/>
    </location>
</feature>
<feature type="strand" evidence="17">
    <location>
        <begin position="230"/>
        <end position="239"/>
    </location>
</feature>
<feature type="strand" evidence="17">
    <location>
        <begin position="241"/>
        <end position="245"/>
    </location>
</feature>
<feature type="turn" evidence="17">
    <location>
        <begin position="246"/>
        <end position="249"/>
    </location>
</feature>
<feature type="strand" evidence="17">
    <location>
        <begin position="250"/>
        <end position="255"/>
    </location>
</feature>
<feature type="strand" evidence="17">
    <location>
        <begin position="261"/>
        <end position="266"/>
    </location>
</feature>
<feature type="strand" evidence="17">
    <location>
        <begin position="268"/>
        <end position="284"/>
    </location>
</feature>
<feature type="strand" evidence="17">
    <location>
        <begin position="289"/>
        <end position="294"/>
    </location>
</feature>
<feature type="strand" evidence="17">
    <location>
        <begin position="296"/>
        <end position="305"/>
    </location>
</feature>
<feature type="strand" evidence="17">
    <location>
        <begin position="317"/>
        <end position="331"/>
    </location>
</feature>
<feature type="strand" evidence="17">
    <location>
        <begin position="337"/>
        <end position="340"/>
    </location>
</feature>
<name>THOC6_HUMAN</name>
<keyword id="KW-0002">3D-structure</keyword>
<keyword id="KW-0025">Alternative splicing</keyword>
<keyword id="KW-0053">Apoptosis</keyword>
<keyword id="KW-0217">Developmental protein</keyword>
<keyword id="KW-0225">Disease variant</keyword>
<keyword id="KW-0991">Intellectual disability</keyword>
<keyword id="KW-0507">mRNA processing</keyword>
<keyword id="KW-0508">mRNA splicing</keyword>
<keyword id="KW-0509">mRNA transport</keyword>
<keyword id="KW-0539">Nucleus</keyword>
<keyword id="KW-0597">Phosphoprotein</keyword>
<keyword id="KW-1267">Proteomics identification</keyword>
<keyword id="KW-1185">Reference proteome</keyword>
<keyword id="KW-0677">Repeat</keyword>
<keyword id="KW-0694">RNA-binding</keyword>
<keyword id="KW-0813">Transport</keyword>
<keyword id="KW-0853">WD repeat</keyword>
<reference key="1">
    <citation type="journal article" date="2004" name="Nat. Genet.">
        <title>Complete sequencing and characterization of 21,243 full-length human cDNAs.</title>
        <authorList>
            <person name="Ota T."/>
            <person name="Suzuki Y."/>
            <person name="Nishikawa T."/>
            <person name="Otsuki T."/>
            <person name="Sugiyama T."/>
            <person name="Irie R."/>
            <person name="Wakamatsu A."/>
            <person name="Hayashi K."/>
            <person name="Sato H."/>
            <person name="Nagai K."/>
            <person name="Kimura K."/>
            <person name="Makita H."/>
            <person name="Sekine M."/>
            <person name="Obayashi M."/>
            <person name="Nishi T."/>
            <person name="Shibahara T."/>
            <person name="Tanaka T."/>
            <person name="Ishii S."/>
            <person name="Yamamoto J."/>
            <person name="Saito K."/>
            <person name="Kawai Y."/>
            <person name="Isono Y."/>
            <person name="Nakamura Y."/>
            <person name="Nagahari K."/>
            <person name="Murakami K."/>
            <person name="Yasuda T."/>
            <person name="Iwayanagi T."/>
            <person name="Wagatsuma M."/>
            <person name="Shiratori A."/>
            <person name="Sudo H."/>
            <person name="Hosoiri T."/>
            <person name="Kaku Y."/>
            <person name="Kodaira H."/>
            <person name="Kondo H."/>
            <person name="Sugawara M."/>
            <person name="Takahashi M."/>
            <person name="Kanda K."/>
            <person name="Yokoi T."/>
            <person name="Furuya T."/>
            <person name="Kikkawa E."/>
            <person name="Omura Y."/>
            <person name="Abe K."/>
            <person name="Kamihara K."/>
            <person name="Katsuta N."/>
            <person name="Sato K."/>
            <person name="Tanikawa M."/>
            <person name="Yamazaki M."/>
            <person name="Ninomiya K."/>
            <person name="Ishibashi T."/>
            <person name="Yamashita H."/>
            <person name="Murakawa K."/>
            <person name="Fujimori K."/>
            <person name="Tanai H."/>
            <person name="Kimata M."/>
            <person name="Watanabe M."/>
            <person name="Hiraoka S."/>
            <person name="Chiba Y."/>
            <person name="Ishida S."/>
            <person name="Ono Y."/>
            <person name="Takiguchi S."/>
            <person name="Watanabe S."/>
            <person name="Yosida M."/>
            <person name="Hotuta T."/>
            <person name="Kusano J."/>
            <person name="Kanehori K."/>
            <person name="Takahashi-Fujii A."/>
            <person name="Hara H."/>
            <person name="Tanase T.-O."/>
            <person name="Nomura Y."/>
            <person name="Togiya S."/>
            <person name="Komai F."/>
            <person name="Hara R."/>
            <person name="Takeuchi K."/>
            <person name="Arita M."/>
            <person name="Imose N."/>
            <person name="Musashino K."/>
            <person name="Yuuki H."/>
            <person name="Oshima A."/>
            <person name="Sasaki N."/>
            <person name="Aotsuka S."/>
            <person name="Yoshikawa Y."/>
            <person name="Matsunawa H."/>
            <person name="Ichihara T."/>
            <person name="Shiohata N."/>
            <person name="Sano S."/>
            <person name="Moriya S."/>
            <person name="Momiyama H."/>
            <person name="Satoh N."/>
            <person name="Takami S."/>
            <person name="Terashima Y."/>
            <person name="Suzuki O."/>
            <person name="Nakagawa S."/>
            <person name="Senoh A."/>
            <person name="Mizoguchi H."/>
            <person name="Goto Y."/>
            <person name="Shimizu F."/>
            <person name="Wakebe H."/>
            <person name="Hishigaki H."/>
            <person name="Watanabe T."/>
            <person name="Sugiyama A."/>
            <person name="Takemoto M."/>
            <person name="Kawakami B."/>
            <person name="Yamazaki M."/>
            <person name="Watanabe K."/>
            <person name="Kumagai A."/>
            <person name="Itakura S."/>
            <person name="Fukuzumi Y."/>
            <person name="Fujimori Y."/>
            <person name="Komiyama M."/>
            <person name="Tashiro H."/>
            <person name="Tanigami A."/>
            <person name="Fujiwara T."/>
            <person name="Ono T."/>
            <person name="Yamada K."/>
            <person name="Fujii Y."/>
            <person name="Ozaki K."/>
            <person name="Hirao M."/>
            <person name="Ohmori Y."/>
            <person name="Kawabata A."/>
            <person name="Hikiji T."/>
            <person name="Kobatake N."/>
            <person name="Inagaki H."/>
            <person name="Ikema Y."/>
            <person name="Okamoto S."/>
            <person name="Okitani R."/>
            <person name="Kawakami T."/>
            <person name="Noguchi S."/>
            <person name="Itoh T."/>
            <person name="Shigeta K."/>
            <person name="Senba T."/>
            <person name="Matsumura K."/>
            <person name="Nakajima Y."/>
            <person name="Mizuno T."/>
            <person name="Morinaga M."/>
            <person name="Sasaki M."/>
            <person name="Togashi T."/>
            <person name="Oyama M."/>
            <person name="Hata H."/>
            <person name="Watanabe M."/>
            <person name="Komatsu T."/>
            <person name="Mizushima-Sugano J."/>
            <person name="Satoh T."/>
            <person name="Shirai Y."/>
            <person name="Takahashi Y."/>
            <person name="Nakagawa K."/>
            <person name="Okumura K."/>
            <person name="Nagase T."/>
            <person name="Nomura N."/>
            <person name="Kikuchi H."/>
            <person name="Masuho Y."/>
            <person name="Yamashita R."/>
            <person name="Nakai K."/>
            <person name="Yada T."/>
            <person name="Nakamura Y."/>
            <person name="Ohara O."/>
            <person name="Isogai T."/>
            <person name="Sugano S."/>
        </authorList>
    </citation>
    <scope>NUCLEOTIDE SEQUENCE [LARGE SCALE MRNA] (ISOFORMS 1 AND 3)</scope>
    <source>
        <tissue>Neuroblastoma</tissue>
        <tissue>Teratocarcinoma</tissue>
    </source>
</reference>
<reference key="2">
    <citation type="journal article" date="2004" name="Genome Res.">
        <title>The status, quality, and expansion of the NIH full-length cDNA project: the Mammalian Gene Collection (MGC).</title>
        <authorList>
            <consortium name="The MGC Project Team"/>
        </authorList>
    </citation>
    <scope>NUCLEOTIDE SEQUENCE [LARGE SCALE MRNA] (ISOFORMS 1 AND 2)</scope>
    <source>
        <tissue>Lung</tissue>
        <tissue>Testis</tissue>
    </source>
</reference>
<reference key="3">
    <citation type="journal article" date="2005" name="Cancer Res.">
        <title>Linking transcriptional elongation and messenger RNA export to metastatic breast cancers.</title>
        <authorList>
            <person name="Guo S."/>
            <person name="Hakimi M.A."/>
            <person name="Baillat D."/>
            <person name="Chen X."/>
            <person name="Farber M.J."/>
            <person name="Klein-Szanto A.J."/>
            <person name="Cooch N.S."/>
            <person name="Godwin A.K."/>
            <person name="Shiekhattar R."/>
        </authorList>
    </citation>
    <scope>IDENTIFICATION IN THE TREX COMPLEX</scope>
    <scope>FUNCTION OF THE TREX COMPLEX</scope>
    <scope>IDENTIFICATION BY MASS SPECTROMETRY</scope>
</reference>
<reference key="4">
    <citation type="journal article" date="2005" name="Genes Dev.">
        <title>Recruitment of the human TREX complex to mRNA during splicing.</title>
        <authorList>
            <person name="Masuda S."/>
            <person name="Das R."/>
            <person name="Cheng H."/>
            <person name="Hurt E."/>
            <person name="Dorman N."/>
            <person name="Reed R."/>
        </authorList>
    </citation>
    <scope>IDENTIFICATION IN THE THO AND TREX COMPLEX</scope>
    <scope>FUNCTION OF THE TREX COMPLEX</scope>
    <scope>IDENTIFICATION BY MASS SPECTROMETRY</scope>
</reference>
<reference key="5">
    <citation type="journal article" date="2006" name="Cell">
        <title>Human mRNA export machinery recruited to the 5' end of mRNA.</title>
        <authorList>
            <person name="Cheng H."/>
            <person name="Dufu K."/>
            <person name="Lee C.-S."/>
            <person name="Hsu J.L."/>
            <person name="Dias A."/>
            <person name="Reed R."/>
        </authorList>
    </citation>
    <scope>FUNCTION OF THE TREX COMPLEX</scope>
</reference>
<reference key="6">
    <citation type="journal article" date="2008" name="PLoS Pathog.">
        <title>Recruitment of the complete hTREX complex is required for Kaposi's sarcoma-associated herpesvirus intronless mRNA nuclear export and virus replication.</title>
        <authorList>
            <person name="Boyne J.R."/>
            <person name="Colgan K.J."/>
            <person name="Whitehouse A."/>
        </authorList>
    </citation>
    <scope>FUNCTION OF THE TREX COMPLEX (MICROBIAL INFECTION)</scope>
</reference>
<reference key="7">
    <citation type="journal article" date="2011" name="BMC Syst. Biol.">
        <title>Initial characterization of the human central proteome.</title>
        <authorList>
            <person name="Burkard T.R."/>
            <person name="Planyavsky M."/>
            <person name="Kaupe I."/>
            <person name="Breitwieser F.P."/>
            <person name="Buerckstuemmer T."/>
            <person name="Bennett K.L."/>
            <person name="Superti-Furga G."/>
            <person name="Colinge J."/>
        </authorList>
    </citation>
    <scope>IDENTIFICATION BY MASS SPECTROMETRY [LARGE SCALE ANALYSIS]</scope>
</reference>
<reference key="8">
    <citation type="journal article" date="2013" name="J. Proteome Res.">
        <title>Toward a comprehensive characterization of a human cancer cell phosphoproteome.</title>
        <authorList>
            <person name="Zhou H."/>
            <person name="Di Palma S."/>
            <person name="Preisinger C."/>
            <person name="Peng M."/>
            <person name="Polat A.N."/>
            <person name="Heck A.J."/>
            <person name="Mohammed S."/>
        </authorList>
    </citation>
    <scope>PHOSPHORYLATION [LARGE SCALE ANALYSIS] AT SER-180</scope>
    <scope>IDENTIFICATION BY MASS SPECTROMETRY [LARGE SCALE ANALYSIS]</scope>
    <source>
        <tissue>Cervix carcinoma</tissue>
        <tissue>Erythroleukemia</tissue>
    </source>
</reference>
<reference key="9">
    <citation type="journal article" date="2013" name="Orphanet J. Rare Dis.">
        <title>Intellectual disability associated with a homozygous missense mutation in THOC6.</title>
        <authorList>
            <person name="Beaulieu C.L."/>
            <person name="Huang L."/>
            <person name="Innes A.M."/>
            <person name="Akimenko M.A."/>
            <person name="Puffenberger E.G."/>
            <person name="Schwartz C."/>
            <person name="Jerry P."/>
            <person name="Ober C."/>
            <person name="Hegele R.A."/>
            <person name="McLeod D.R."/>
            <person name="Schwartzentruber J."/>
            <person name="Majewski J."/>
            <person name="Bulman D.E."/>
            <person name="Parboosingh J.S."/>
            <person name="Boycott K.M."/>
        </authorList>
    </citation>
    <scope>FUNCTION</scope>
    <scope>SUBCELLULAR LOCATION</scope>
    <scope>VARIANT BBIS ARG-46</scope>
    <scope>CHARACTERIZATION OF VARIANT BBIS ARG-46</scope>
</reference>
<reference evidence="13" key="10">
    <citation type="journal article" date="2020" name="Elife">
        <title>Structure of the human core transcription-export complex reveals a hub for multivalent interactions.</title>
        <authorList>
            <person name="Puehringer T."/>
            <person name="Hohmann U."/>
            <person name="Fin L."/>
            <person name="Pacheco-Fiallos B."/>
            <person name="Schellhaas U."/>
            <person name="Brennecke J."/>
            <person name="Plaschka C."/>
        </authorList>
    </citation>
    <scope>STRUCTURE BY ELECTRON MICROSCOPY (3.30 ANGSTROMS) IN THO-DDX39B COMPLEX</scope>
    <scope>FUNCTION</scope>
    <scope>SUBUNIT</scope>
</reference>
<reference evidence="14 15" key="11">
    <citation type="journal article" date="2023" name="Nature">
        <title>mRNA recognition and packaging by the human transcription-export complex.</title>
        <authorList>
            <person name="Pacheco-Fiallos B."/>
            <person name="Vorlander M.K."/>
            <person name="Riabov-Bassat D."/>
            <person name="Fin L."/>
            <person name="O'Reilly F.J."/>
            <person name="Ayala F.I."/>
            <person name="Schellhaas U."/>
            <person name="Rappsilber J."/>
            <person name="Plaschka C."/>
        </authorList>
    </citation>
    <scope>STRUCTURE BY ELECTRON MICROSCOPY (3.45 ANGSTROMS) IN TREX COMPLEX</scope>
    <scope>SUBUNIT</scope>
</reference>